<comment type="function">
    <text evidence="4 8 9 10">Receptor for thrombopoietin that regulates hematopoietic stem cell renewal, megakaryocyte differentiation, and platelet formation (PubMed:8630375, PubMed:9122198, PubMed:9639492). Upon activation by THPO, induces rapid tyrosine phosphorylation and activation of JAK2, providing docking sites for many signaling proteins such as STAT5, SHIP/INPP5D, GRB2, SOS1 and PI3K. In turn, These signaling cascades lead to the proliferation, survival, and differentiation of megakaryocytes, ultimately leading to increased platelet production.</text>
</comment>
<comment type="function">
    <molecule>Isoform Mpl-tr</molecule>
    <text evidence="4">Acts as an inhibitor of thrombopoietin signaling by promoting protein down-regulation of full-length isoform Mpl-fl.</text>
</comment>
<comment type="subunit">
    <text evidence="1 7">Homodimer (PubMed:38326297). Interacts with ATXN2L. Interacts with JAK2 and TYK2; these interactions increase MPL localization to the cell membrane. Interacts with THPO (PubMed:38326297). Interacts with SHIP/INPP5D. Interacts with kinases BTK and SYK (By similarity).</text>
</comment>
<comment type="subcellular location">
    <subcellularLocation>
        <location evidence="1">Cell membrane</location>
        <topology evidence="1">Single-pass type I membrane protein</topology>
    </subcellularLocation>
    <subcellularLocation>
        <location evidence="1">Golgi apparatus</location>
    </subcellularLocation>
    <subcellularLocation>
        <location evidence="1">Cell surface</location>
    </subcellularLocation>
</comment>
<comment type="alternative products">
    <event type="alternative splicing"/>
    <isoform>
        <id>Q08351-1</id>
        <name evidence="11">Mpl-fl</name>
        <name evidence="11">Mpl-full-length</name>
        <sequence type="displayed"/>
    </isoform>
    <isoform>
        <id>Q08351-2</id>
        <name evidence="11">Mpl-tr</name>
        <name evidence="11">Mpl-truncated</name>
        <sequence type="described" ref="VSP_059621 VSP_059622"/>
    </isoform>
</comment>
<comment type="induction">
    <text evidence="5">Expression in the bone marrow displays diurnal rhythmicity (a circadian rhythm that is synchronized with the day/night cycle).</text>
</comment>
<comment type="domain">
    <text>The WSXWS motif appears to be necessary for proper protein folding and thereby efficient intracellular transport and cell-surface receptor binding.</text>
</comment>
<comment type="domain">
    <text>The box 1 motif is required for JAK interaction and/or activation.</text>
</comment>
<comment type="PTM">
    <text evidence="1">Ubiquitination at Lys-544 and Lys-564 targets MPL for degradation by both the lysosomal and proteasomal pathways. The E3 ubiquitin-protein ligase CBL significantly contributes to this ubiquitination.</text>
</comment>
<comment type="disruption phenotype">
    <text evidence="8">Mpl-deletion mice produce residual numbers of platelets that are sufficient to prevent bleeding and allow normal survival.</text>
</comment>
<comment type="miscellaneous">
    <molecule>Isoform Mpl-tr</molecule>
    <text evidence="6">Rbm15 regulates the production of isoform Mpl-tr.</text>
</comment>
<comment type="similarity">
    <text evidence="12">Belongs to the type I cytokine receptor family. Type 1 subfamily.</text>
</comment>
<proteinExistence type="evidence at protein level"/>
<name>TPOR_MOUSE</name>
<keyword id="KW-0002">3D-structure</keyword>
<keyword id="KW-0025">Alternative splicing</keyword>
<keyword id="KW-1003">Cell membrane</keyword>
<keyword id="KW-0325">Glycoprotein</keyword>
<keyword id="KW-0333">Golgi apparatus</keyword>
<keyword id="KW-1017">Isopeptide bond</keyword>
<keyword id="KW-0472">Membrane</keyword>
<keyword id="KW-0597">Phosphoprotein</keyword>
<keyword id="KW-0675">Receptor</keyword>
<keyword id="KW-1185">Reference proteome</keyword>
<keyword id="KW-0677">Repeat</keyword>
<keyword id="KW-0732">Signal</keyword>
<keyword id="KW-0812">Transmembrane</keyword>
<keyword id="KW-1133">Transmembrane helix</keyword>
<keyword id="KW-0832">Ubl conjugation</keyword>
<reference key="1">
    <citation type="journal article" date="1993" name="EMBO J.">
        <title>Murine c-mpl: a member of the hematopoietic growth factor receptor superfamily that transduces a proliferative signal.</title>
        <authorList>
            <person name="Skoda R.C."/>
            <person name="Seldin D.C."/>
            <person name="Chiang M.K."/>
            <person name="Peichel C.L."/>
            <person name="Vogt T.F."/>
            <person name="Leder P."/>
        </authorList>
    </citation>
    <scope>NUCLEOTIDE SEQUENCE [GENOMIC DNA / MRNA]</scope>
</reference>
<reference key="2">
    <citation type="journal article" date="1993" name="Oncogene">
        <title>Characterization of the murine Mpl proto-oncogene, a member of the hematopoietic cytokine receptor family: molecular cloning, chromosomal location and evidence for a function in cell growth.</title>
        <authorList>
            <person name="Vigon I."/>
            <person name="Florindo C."/>
            <person name="Fichelson S."/>
            <person name="Guenet J.-L."/>
            <person name="Mattei M.-G."/>
            <person name="Souyri M."/>
            <person name="Cosman D."/>
            <person name="Gisselbrecht S."/>
        </authorList>
    </citation>
    <scope>NUCLEOTIDE SEQUENCE [MRNA]</scope>
    <source>
        <strain>ICFW</strain>
        <tissue>Fetal liver</tissue>
    </source>
</reference>
<reference key="3">
    <citation type="journal article" date="2005" name="Science">
        <title>The transcriptional landscape of the mammalian genome.</title>
        <authorList>
            <person name="Carninci P."/>
            <person name="Kasukawa T."/>
            <person name="Katayama S."/>
            <person name="Gough J."/>
            <person name="Frith M.C."/>
            <person name="Maeda N."/>
            <person name="Oyama R."/>
            <person name="Ravasi T."/>
            <person name="Lenhard B."/>
            <person name="Wells C."/>
            <person name="Kodzius R."/>
            <person name="Shimokawa K."/>
            <person name="Bajic V.B."/>
            <person name="Brenner S.E."/>
            <person name="Batalov S."/>
            <person name="Forrest A.R."/>
            <person name="Zavolan M."/>
            <person name="Davis M.J."/>
            <person name="Wilming L.G."/>
            <person name="Aidinis V."/>
            <person name="Allen J.E."/>
            <person name="Ambesi-Impiombato A."/>
            <person name="Apweiler R."/>
            <person name="Aturaliya R.N."/>
            <person name="Bailey T.L."/>
            <person name="Bansal M."/>
            <person name="Baxter L."/>
            <person name="Beisel K.W."/>
            <person name="Bersano T."/>
            <person name="Bono H."/>
            <person name="Chalk A.M."/>
            <person name="Chiu K.P."/>
            <person name="Choudhary V."/>
            <person name="Christoffels A."/>
            <person name="Clutterbuck D.R."/>
            <person name="Crowe M.L."/>
            <person name="Dalla E."/>
            <person name="Dalrymple B.P."/>
            <person name="de Bono B."/>
            <person name="Della Gatta G."/>
            <person name="di Bernardo D."/>
            <person name="Down T."/>
            <person name="Engstrom P."/>
            <person name="Fagiolini M."/>
            <person name="Faulkner G."/>
            <person name="Fletcher C.F."/>
            <person name="Fukushima T."/>
            <person name="Furuno M."/>
            <person name="Futaki S."/>
            <person name="Gariboldi M."/>
            <person name="Georgii-Hemming P."/>
            <person name="Gingeras T.R."/>
            <person name="Gojobori T."/>
            <person name="Green R.E."/>
            <person name="Gustincich S."/>
            <person name="Harbers M."/>
            <person name="Hayashi Y."/>
            <person name="Hensch T.K."/>
            <person name="Hirokawa N."/>
            <person name="Hill D."/>
            <person name="Huminiecki L."/>
            <person name="Iacono M."/>
            <person name="Ikeo K."/>
            <person name="Iwama A."/>
            <person name="Ishikawa T."/>
            <person name="Jakt M."/>
            <person name="Kanapin A."/>
            <person name="Katoh M."/>
            <person name="Kawasawa Y."/>
            <person name="Kelso J."/>
            <person name="Kitamura H."/>
            <person name="Kitano H."/>
            <person name="Kollias G."/>
            <person name="Krishnan S.P."/>
            <person name="Kruger A."/>
            <person name="Kummerfeld S.K."/>
            <person name="Kurochkin I.V."/>
            <person name="Lareau L.F."/>
            <person name="Lazarevic D."/>
            <person name="Lipovich L."/>
            <person name="Liu J."/>
            <person name="Liuni S."/>
            <person name="McWilliam S."/>
            <person name="Madan Babu M."/>
            <person name="Madera M."/>
            <person name="Marchionni L."/>
            <person name="Matsuda H."/>
            <person name="Matsuzawa S."/>
            <person name="Miki H."/>
            <person name="Mignone F."/>
            <person name="Miyake S."/>
            <person name="Morris K."/>
            <person name="Mottagui-Tabar S."/>
            <person name="Mulder N."/>
            <person name="Nakano N."/>
            <person name="Nakauchi H."/>
            <person name="Ng P."/>
            <person name="Nilsson R."/>
            <person name="Nishiguchi S."/>
            <person name="Nishikawa S."/>
            <person name="Nori F."/>
            <person name="Ohara O."/>
            <person name="Okazaki Y."/>
            <person name="Orlando V."/>
            <person name="Pang K.C."/>
            <person name="Pavan W.J."/>
            <person name="Pavesi G."/>
            <person name="Pesole G."/>
            <person name="Petrovsky N."/>
            <person name="Piazza S."/>
            <person name="Reed J."/>
            <person name="Reid J.F."/>
            <person name="Ring B.Z."/>
            <person name="Ringwald M."/>
            <person name="Rost B."/>
            <person name="Ruan Y."/>
            <person name="Salzberg S.L."/>
            <person name="Sandelin A."/>
            <person name="Schneider C."/>
            <person name="Schoenbach C."/>
            <person name="Sekiguchi K."/>
            <person name="Semple C.A."/>
            <person name="Seno S."/>
            <person name="Sessa L."/>
            <person name="Sheng Y."/>
            <person name="Shibata Y."/>
            <person name="Shimada H."/>
            <person name="Shimada K."/>
            <person name="Silva D."/>
            <person name="Sinclair B."/>
            <person name="Sperling S."/>
            <person name="Stupka E."/>
            <person name="Sugiura K."/>
            <person name="Sultana R."/>
            <person name="Takenaka Y."/>
            <person name="Taki K."/>
            <person name="Tammoja K."/>
            <person name="Tan S.L."/>
            <person name="Tang S."/>
            <person name="Taylor M.S."/>
            <person name="Tegner J."/>
            <person name="Teichmann S.A."/>
            <person name="Ueda H.R."/>
            <person name="van Nimwegen E."/>
            <person name="Verardo R."/>
            <person name="Wei C.L."/>
            <person name="Yagi K."/>
            <person name="Yamanishi H."/>
            <person name="Zabarovsky E."/>
            <person name="Zhu S."/>
            <person name="Zimmer A."/>
            <person name="Hide W."/>
            <person name="Bult C."/>
            <person name="Grimmond S.M."/>
            <person name="Teasdale R.D."/>
            <person name="Liu E.T."/>
            <person name="Brusic V."/>
            <person name="Quackenbush J."/>
            <person name="Wahlestedt C."/>
            <person name="Mattick J.S."/>
            <person name="Hume D.A."/>
            <person name="Kai C."/>
            <person name="Sasaki D."/>
            <person name="Tomaru Y."/>
            <person name="Fukuda S."/>
            <person name="Kanamori-Katayama M."/>
            <person name="Suzuki M."/>
            <person name="Aoki J."/>
            <person name="Arakawa T."/>
            <person name="Iida J."/>
            <person name="Imamura K."/>
            <person name="Itoh M."/>
            <person name="Kato T."/>
            <person name="Kawaji H."/>
            <person name="Kawagashira N."/>
            <person name="Kawashima T."/>
            <person name="Kojima M."/>
            <person name="Kondo S."/>
            <person name="Konno H."/>
            <person name="Nakano K."/>
            <person name="Ninomiya N."/>
            <person name="Nishio T."/>
            <person name="Okada M."/>
            <person name="Plessy C."/>
            <person name="Shibata K."/>
            <person name="Shiraki T."/>
            <person name="Suzuki S."/>
            <person name="Tagami M."/>
            <person name="Waki K."/>
            <person name="Watahiki A."/>
            <person name="Okamura-Oho Y."/>
            <person name="Suzuki H."/>
            <person name="Kawai J."/>
            <person name="Hayashizaki Y."/>
        </authorList>
    </citation>
    <scope>NUCLEOTIDE SEQUENCE [LARGE SCALE MRNA]</scope>
    <source>
        <strain>C57BL/6J</strain>
        <tissue>Aorta</tissue>
        <tissue>Vein</tissue>
    </source>
</reference>
<reference key="4">
    <citation type="journal article" date="2009" name="PLoS Biol.">
        <title>Lineage-specific biology revealed by a finished genome assembly of the mouse.</title>
        <authorList>
            <person name="Church D.M."/>
            <person name="Goodstadt L."/>
            <person name="Hillier L.W."/>
            <person name="Zody M.C."/>
            <person name="Goldstein S."/>
            <person name="She X."/>
            <person name="Bult C.J."/>
            <person name="Agarwala R."/>
            <person name="Cherry J.L."/>
            <person name="DiCuccio M."/>
            <person name="Hlavina W."/>
            <person name="Kapustin Y."/>
            <person name="Meric P."/>
            <person name="Maglott D."/>
            <person name="Birtle Z."/>
            <person name="Marques A.C."/>
            <person name="Graves T."/>
            <person name="Zhou S."/>
            <person name="Teague B."/>
            <person name="Potamousis K."/>
            <person name="Churas C."/>
            <person name="Place M."/>
            <person name="Herschleb J."/>
            <person name="Runnheim R."/>
            <person name="Forrest D."/>
            <person name="Amos-Landgraf J."/>
            <person name="Schwartz D.C."/>
            <person name="Cheng Z."/>
            <person name="Lindblad-Toh K."/>
            <person name="Eichler E.E."/>
            <person name="Ponting C.P."/>
        </authorList>
    </citation>
    <scope>NUCLEOTIDE SEQUENCE [LARGE SCALE GENOMIC DNA]</scope>
    <source>
        <strain>C57BL/6J</strain>
    </source>
</reference>
<reference key="5">
    <citation type="journal article" date="2004" name="Genome Res.">
        <title>The status, quality, and expansion of the NIH full-length cDNA project: the Mammalian Gene Collection (MGC).</title>
        <authorList>
            <consortium name="The MGC Project Team"/>
        </authorList>
    </citation>
    <scope>NUCLEOTIDE SEQUENCE [LARGE SCALE MRNA]</scope>
</reference>
<reference key="6">
    <citation type="journal article" date="1996" name="Blood">
        <title>Deficiencies in progenitor cells of multiple hematopoietic lineages and defective megakaryocytopoiesis in mice lacking the thrombopoietic receptor c-Mpl.</title>
        <authorList>
            <person name="Alexander W.S."/>
            <person name="Roberts A.W."/>
            <person name="Nicola N.A."/>
            <person name="Li R."/>
            <person name="Metcalf D."/>
        </authorList>
    </citation>
    <scope>FUNCTION</scope>
    <scope>DISRUPTION PHENOTYPE</scope>
</reference>
<reference key="7">
    <citation type="journal article" date="1997" name="Proc. Natl. Acad. Sci. U.S.A.">
        <title>Dissecting the thrombopoietin receptor: functional elements of the Mpl cytoplasmic domain.</title>
        <authorList>
            <person name="Drachman J.G."/>
            <person name="Kaushansky K."/>
        </authorList>
    </citation>
    <scope>FUNCTION</scope>
    <scope>PHOSPHORYLATION AT TYR-616 AND TYR-621</scope>
</reference>
<reference key="8">
    <citation type="journal article" date="1998" name="Blood">
        <title>Role of c-mpl in early hematopoiesis.</title>
        <authorList>
            <person name="Solar G.P."/>
            <person name="Kerr W.G."/>
            <person name="Zeigler F.C."/>
            <person name="Hess D."/>
            <person name="Donahue C."/>
            <person name="de Sauvage F.J."/>
            <person name="Eaton D.L."/>
        </authorList>
    </citation>
    <scope>FUNCTION IN HEMATOPOIESIS</scope>
</reference>
<reference key="9">
    <citation type="journal article" date="2004" name="J. Biol. Chem.">
        <title>A truncated isoform of c-Mpl with an essential C-terminal peptide targets the full-length receptor for degradation.</title>
        <authorList>
            <person name="Coers J."/>
            <person name="Ranft C."/>
            <person name="Skoda R.C."/>
        </authorList>
    </citation>
    <scope>FUNCTION</scope>
    <scope>ALTERNATIVE SPLICING</scope>
</reference>
<reference key="10">
    <citation type="journal article" date="2012" name="J. Thromb. Haemost.">
        <title>Diurnal expression of the thrombopoietin gene is regulated by CLOCK.</title>
        <authorList>
            <person name="Tracey C.J."/>
            <person name="Pan X."/>
            <person name="Catterson J.H."/>
            <person name="Harmar A.J."/>
            <person name="Hussain M.M."/>
            <person name="Hartley P.S."/>
        </authorList>
    </citation>
    <scope>INDUCTION</scope>
</reference>
<reference key="11">
    <citation type="journal article" date="2015" name="Blood">
        <title>Ott1 (Rbm15) regulates thrombopoietin response in hematopoietic stem cells through alternative splicing of c-Mpl.</title>
        <authorList>
            <person name="Xiao N."/>
            <person name="Laha S."/>
            <person name="Das S.P."/>
            <person name="Morlock K."/>
            <person name="Jesneck J.L."/>
            <person name="Raffel G.D."/>
        </authorList>
    </citation>
    <scope>ALTERNATIVE SPLICING</scope>
</reference>
<reference evidence="13" key="12">
    <citation type="journal article" date="2024" name="Nat. Commun.">
        <title>Cryo-EM structure of the extracellular domain of murine Thrombopoietin Receptor in complex with Thrombopoietin.</title>
        <authorList>
            <person name="Sarson-Lawrence K.T.G."/>
            <person name="Hardy J.M."/>
            <person name="Iaria J."/>
            <person name="Stockwell D."/>
            <person name="Behrens K."/>
            <person name="Saiyed T."/>
            <person name="Tan C."/>
            <person name="Jebeli L."/>
            <person name="Scott N.E."/>
            <person name="Dite T.A."/>
            <person name="Nicola N.A."/>
            <person name="Leis A.P."/>
            <person name="Babon J.J."/>
            <person name="Kershaw N.J."/>
        </authorList>
    </citation>
    <scope>STRUCTURE BY ELECTRON MICROSCOPY (3.60 ANGSTROMS) OF 26-482</scope>
    <scope>DISULFIDE BONDS</scope>
    <scope>INTERACTION WITH THPO</scope>
    <scope>SUBUNIT</scope>
    <scope>MUTAGENESIS OF PHE-104</scope>
</reference>
<sequence length="625" mass="69788">MPSWALFMVTSCLLLALPNQAQVTSQDVFLLALGTEPLNCFSQTFEDLTCFWDEEEAAPSGTYQLLYAYRGEKPRACPLYSQSVPTFGTRYVCQFPAQDEVRLFFPLHLWVKNVSLNQTLIQRVLFVDSVGLPAPPRVIKARGGSQPGELQIHWEAPAPEISDFLRHELRYGPTDSSNATAPSVIQLLSTETCCPTLWMPNPVPVLDQPPCVHPTASQPHGPAPFLTVKGGSCLVSGLQAGKSYWLQLRSQPDGVSLRGSWGPWSFPVTVDLPGDAVTIGLQCFTLDLKMVTCQWQQQDRTSSQGFFRHSRTRCCPTDRDPTWEKCEEEEPRPGSQPALVSRCHFKSRNDSVIHILVEVTTAQGAVHSYLGSPFWIHQAVLLPTPSLHWREVSSGRLELEWQHQSSWAAQETCYQLRYTGEGREDWKVLEPSLGARGGTLELRPRARYSLQLRARLNGPTYQGPWSAWSPPARVSTGSETAWITLVTALLLVLSLSALLGLLLLKWQFPAHYRRLRHALWPSLPDLHRVLGQYLRDTAALSPSKATVTDSCEEVEPSLLEILPKSSESTPLPLCPSQPQMDYRGLQPCLRTMPLSVCPPMAETGSCCTTHIANHSYLPLSYWQQP</sequence>
<dbReference type="EMBL" id="Z22649">
    <property type="protein sequence ID" value="CAA80365.1"/>
    <property type="molecule type" value="mRNA"/>
</dbReference>
<dbReference type="EMBL" id="Z22657">
    <property type="protein sequence ID" value="CAA80372.1"/>
    <property type="molecule type" value="Genomic_DNA"/>
</dbReference>
<dbReference type="EMBL" id="X73677">
    <property type="protein sequence ID" value="CAA52031.1"/>
    <property type="molecule type" value="mRNA"/>
</dbReference>
<dbReference type="EMBL" id="AK041166">
    <property type="protein sequence ID" value="BAC30846.1"/>
    <property type="molecule type" value="mRNA"/>
</dbReference>
<dbReference type="EMBL" id="AL627212">
    <property type="status" value="NOT_ANNOTATED_CDS"/>
    <property type="molecule type" value="Genomic_DNA"/>
</dbReference>
<dbReference type="EMBL" id="BC146613">
    <property type="protein sequence ID" value="AAI46614.1"/>
    <property type="molecule type" value="mRNA"/>
</dbReference>
<dbReference type="CCDS" id="CCDS18552.1">
    <molecule id="Q08351-1"/>
</dbReference>
<dbReference type="PIR" id="S35317">
    <property type="entry name" value="S35317"/>
</dbReference>
<dbReference type="PIR" id="S37622">
    <property type="entry name" value="S37622"/>
</dbReference>
<dbReference type="RefSeq" id="NP_001116421.1">
    <property type="nucleotide sequence ID" value="NM_001122949.2"/>
</dbReference>
<dbReference type="RefSeq" id="NP_001272425.1">
    <property type="nucleotide sequence ID" value="NM_001285496.1"/>
</dbReference>
<dbReference type="RefSeq" id="NP_001272426.1">
    <property type="nucleotide sequence ID" value="NM_001285497.1"/>
</dbReference>
<dbReference type="RefSeq" id="NP_034953.2">
    <molecule id="Q08351-1"/>
    <property type="nucleotide sequence ID" value="NM_010823.4"/>
</dbReference>
<dbReference type="PDB" id="8U18">
    <property type="method" value="EM"/>
    <property type="resolution" value="3.60 A"/>
    <property type="chains" value="A/B=26-482"/>
</dbReference>
<dbReference type="PDB" id="8VU5">
    <property type="method" value="EM"/>
    <property type="resolution" value="3.39 A"/>
    <property type="chains" value="B/C=26-482"/>
</dbReference>
<dbReference type="PDBsum" id="8U18"/>
<dbReference type="PDBsum" id="8VU5"/>
<dbReference type="EMDB" id="EMD-43526"/>
<dbReference type="SMR" id="Q08351"/>
<dbReference type="BioGRID" id="201478">
    <property type="interactions" value="2"/>
</dbReference>
<dbReference type="FunCoup" id="Q08351">
    <property type="interactions" value="512"/>
</dbReference>
<dbReference type="IntAct" id="Q08351">
    <property type="interactions" value="1"/>
</dbReference>
<dbReference type="STRING" id="10090.ENSMUSP00000006556"/>
<dbReference type="ChEMBL" id="CHEMBL1075309"/>
<dbReference type="GlyCosmos" id="Q08351">
    <property type="glycosylation" value="1 site, No reported glycans"/>
</dbReference>
<dbReference type="GlyGen" id="Q08351">
    <property type="glycosylation" value="2 sites"/>
</dbReference>
<dbReference type="iPTMnet" id="Q08351"/>
<dbReference type="PhosphoSitePlus" id="Q08351"/>
<dbReference type="PaxDb" id="10090-ENSMUSP00000099732"/>
<dbReference type="ProteomicsDB" id="259503">
    <molecule id="Q08351-1"/>
</dbReference>
<dbReference type="ABCD" id="Q08351">
    <property type="antibodies" value="3 sequenced antibodies"/>
</dbReference>
<dbReference type="Antibodypedia" id="2379">
    <property type="antibodies" value="374 antibodies from 32 providers"/>
</dbReference>
<dbReference type="DNASU" id="17480"/>
<dbReference type="Ensembl" id="ENSMUST00000102671.10">
    <molecule id="Q08351-1"/>
    <property type="protein sequence ID" value="ENSMUSP00000099732.4"/>
    <property type="gene ID" value="ENSMUSG00000006389.14"/>
</dbReference>
<dbReference type="GeneID" id="17480"/>
<dbReference type="KEGG" id="mmu:17480"/>
<dbReference type="UCSC" id="uc008uke.3">
    <molecule id="Q08351-1"/>
    <property type="organism name" value="mouse"/>
</dbReference>
<dbReference type="AGR" id="MGI:97076"/>
<dbReference type="CTD" id="4352"/>
<dbReference type="MGI" id="MGI:97076">
    <property type="gene designation" value="Mpl"/>
</dbReference>
<dbReference type="VEuPathDB" id="HostDB:ENSMUSG00000006389"/>
<dbReference type="eggNOG" id="ENOG502RYN1">
    <property type="taxonomic scope" value="Eukaryota"/>
</dbReference>
<dbReference type="GeneTree" id="ENSGT00940000161225"/>
<dbReference type="HOGENOM" id="CLU_029931_1_0_1"/>
<dbReference type="InParanoid" id="Q08351"/>
<dbReference type="OMA" id="HGPTYQG"/>
<dbReference type="OrthoDB" id="8608526at2759"/>
<dbReference type="TreeFam" id="TF336573"/>
<dbReference type="BioGRID-ORCS" id="17480">
    <property type="hits" value="2 hits in 80 CRISPR screens"/>
</dbReference>
<dbReference type="ChiTaRS" id="Mpl">
    <property type="organism name" value="mouse"/>
</dbReference>
<dbReference type="PRO" id="PR:Q08351"/>
<dbReference type="Proteomes" id="UP000000589">
    <property type="component" value="Chromosome 4"/>
</dbReference>
<dbReference type="RNAct" id="Q08351">
    <property type="molecule type" value="protein"/>
</dbReference>
<dbReference type="Bgee" id="ENSMUSG00000006389">
    <property type="expression patterns" value="Expressed in blood and 41 other cell types or tissues"/>
</dbReference>
<dbReference type="ExpressionAtlas" id="Q08351">
    <property type="expression patterns" value="baseline and differential"/>
</dbReference>
<dbReference type="GO" id="GO:0009986">
    <property type="term" value="C:cell surface"/>
    <property type="evidence" value="ECO:0000250"/>
    <property type="project" value="UniProtKB"/>
</dbReference>
<dbReference type="GO" id="GO:0005794">
    <property type="term" value="C:Golgi apparatus"/>
    <property type="evidence" value="ECO:0000250"/>
    <property type="project" value="UniProtKB"/>
</dbReference>
<dbReference type="GO" id="GO:0005886">
    <property type="term" value="C:plasma membrane"/>
    <property type="evidence" value="ECO:0007669"/>
    <property type="project" value="UniProtKB-SubCell"/>
</dbReference>
<dbReference type="GO" id="GO:0038164">
    <property type="term" value="F:thrombopoietin receptor activity"/>
    <property type="evidence" value="ECO:0000250"/>
    <property type="project" value="UniProtKB"/>
</dbReference>
<dbReference type="GO" id="GO:0060216">
    <property type="term" value="P:definitive hemopoiesis"/>
    <property type="evidence" value="ECO:0000315"/>
    <property type="project" value="MGI"/>
</dbReference>
<dbReference type="GO" id="GO:0048872">
    <property type="term" value="P:homeostasis of number of cells"/>
    <property type="evidence" value="ECO:0000315"/>
    <property type="project" value="MGI"/>
</dbReference>
<dbReference type="GO" id="GO:0043066">
    <property type="term" value="P:negative regulation of apoptotic process"/>
    <property type="evidence" value="ECO:0000315"/>
    <property type="project" value="MGI"/>
</dbReference>
<dbReference type="GO" id="GO:0030220">
    <property type="term" value="P:platelet formation"/>
    <property type="evidence" value="ECO:0000316"/>
    <property type="project" value="MGI"/>
</dbReference>
<dbReference type="GO" id="GO:0010628">
    <property type="term" value="P:positive regulation of gene expression"/>
    <property type="evidence" value="ECO:0000315"/>
    <property type="project" value="MGI"/>
</dbReference>
<dbReference type="GO" id="GO:0032642">
    <property type="term" value="P:regulation of chemokine production"/>
    <property type="evidence" value="ECO:0000315"/>
    <property type="project" value="MGI"/>
</dbReference>
<dbReference type="GO" id="GO:2000035">
    <property type="term" value="P:regulation of stem cell division"/>
    <property type="evidence" value="ECO:0000315"/>
    <property type="project" value="MGI"/>
</dbReference>
<dbReference type="GO" id="GO:0072091">
    <property type="term" value="P:regulation of stem cell proliferation"/>
    <property type="evidence" value="ECO:0000315"/>
    <property type="project" value="MGI"/>
</dbReference>
<dbReference type="GO" id="GO:0038163">
    <property type="term" value="P:thrombopoietin-mediated signaling pathway"/>
    <property type="evidence" value="ECO:0000314"/>
    <property type="project" value="UniProtKB"/>
</dbReference>
<dbReference type="CDD" id="cd00063">
    <property type="entry name" value="FN3"/>
    <property type="match status" value="1"/>
</dbReference>
<dbReference type="FunFam" id="2.60.40.10:FF:001270">
    <property type="entry name" value="MPL proto-oncogene, thrombopoietin receptor"/>
    <property type="match status" value="1"/>
</dbReference>
<dbReference type="FunFam" id="2.60.40.10:FF:001271">
    <property type="entry name" value="MPL proto-oncogene, thrombopoietin receptor"/>
    <property type="match status" value="1"/>
</dbReference>
<dbReference type="Gene3D" id="2.60.40.10">
    <property type="entry name" value="Immunoglobulins"/>
    <property type="match status" value="4"/>
</dbReference>
<dbReference type="InterPro" id="IPR003961">
    <property type="entry name" value="FN3_dom"/>
</dbReference>
<dbReference type="InterPro" id="IPR036116">
    <property type="entry name" value="FN3_sf"/>
</dbReference>
<dbReference type="InterPro" id="IPR015152">
    <property type="entry name" value="Growth/epo_recpt_lig-bind"/>
</dbReference>
<dbReference type="InterPro" id="IPR013783">
    <property type="entry name" value="Ig-like_fold"/>
</dbReference>
<dbReference type="InterPro" id="IPR003528">
    <property type="entry name" value="Long_hematopoietin_rcpt_CS"/>
</dbReference>
<dbReference type="PANTHER" id="PTHR23037">
    <property type="entry name" value="CYTOKINE RECEPTOR"/>
    <property type="match status" value="1"/>
</dbReference>
<dbReference type="PANTHER" id="PTHR23037:SF28">
    <property type="entry name" value="ERYTHROPOIETIN RECEPTOR"/>
    <property type="match status" value="1"/>
</dbReference>
<dbReference type="Pfam" id="PF09067">
    <property type="entry name" value="EpoR_lig-bind"/>
    <property type="match status" value="1"/>
</dbReference>
<dbReference type="SMART" id="SM00060">
    <property type="entry name" value="FN3"/>
    <property type="match status" value="2"/>
</dbReference>
<dbReference type="SUPFAM" id="SSF49265">
    <property type="entry name" value="Fibronectin type III"/>
    <property type="match status" value="3"/>
</dbReference>
<dbReference type="PROSITE" id="PS50853">
    <property type="entry name" value="FN3"/>
    <property type="match status" value="1"/>
</dbReference>
<dbReference type="PROSITE" id="PS01352">
    <property type="entry name" value="HEMATOPO_REC_L_F1"/>
    <property type="match status" value="1"/>
</dbReference>
<organism>
    <name type="scientific">Mus musculus</name>
    <name type="common">Mouse</name>
    <dbReference type="NCBI Taxonomy" id="10090"/>
    <lineage>
        <taxon>Eukaryota</taxon>
        <taxon>Metazoa</taxon>
        <taxon>Chordata</taxon>
        <taxon>Craniata</taxon>
        <taxon>Vertebrata</taxon>
        <taxon>Euteleostomi</taxon>
        <taxon>Mammalia</taxon>
        <taxon>Eutheria</taxon>
        <taxon>Euarchontoglires</taxon>
        <taxon>Glires</taxon>
        <taxon>Rodentia</taxon>
        <taxon>Myomorpha</taxon>
        <taxon>Muroidea</taxon>
        <taxon>Muridae</taxon>
        <taxon>Murinae</taxon>
        <taxon>Mus</taxon>
        <taxon>Mus</taxon>
    </lineage>
</organism>
<feature type="signal peptide" evidence="2">
    <location>
        <begin position="1"/>
        <end position="25"/>
    </location>
</feature>
<feature type="chain" id="PRO_0000010988" description="Thrombopoietin receptor">
    <location>
        <begin position="26"/>
        <end position="625"/>
    </location>
</feature>
<feature type="topological domain" description="Extracellular" evidence="2">
    <location>
        <begin position="26"/>
        <end position="482"/>
    </location>
</feature>
<feature type="transmembrane region" description="Helical" evidence="2">
    <location>
        <begin position="483"/>
        <end position="504"/>
    </location>
</feature>
<feature type="topological domain" description="Cytoplasmic" evidence="2">
    <location>
        <begin position="505"/>
        <end position="625"/>
    </location>
</feature>
<feature type="domain" description="Fibronectin type-III 1" evidence="3">
    <location>
        <begin position="178"/>
        <end position="270"/>
    </location>
</feature>
<feature type="domain" description="Fibronectin type-III 2" evidence="3">
    <location>
        <begin position="383"/>
        <end position="479"/>
    </location>
</feature>
<feature type="short sequence motif" description="WSXWS motif">
    <location>
        <begin position="465"/>
        <end position="469"/>
    </location>
</feature>
<feature type="short sequence motif" description="Box 1 motif">
    <location>
        <begin position="519"/>
        <end position="527"/>
    </location>
</feature>
<feature type="modified residue" description="Phosphotyrosine" evidence="9">
    <location>
        <position position="616"/>
    </location>
</feature>
<feature type="modified residue" description="Phosphotyrosine" evidence="9">
    <location>
        <position position="621"/>
    </location>
</feature>
<feature type="glycosylation site" description="N-linked (GlcNAc...) asparagine" evidence="2">
    <location>
        <position position="117"/>
    </location>
</feature>
<feature type="cross-link" description="Glycyl lysine isopeptide (Lys-Gly) (interchain with G-Cter in ubiquitin)" evidence="1">
    <location>
        <position position="544"/>
    </location>
</feature>
<feature type="cross-link" description="Glycyl lysine isopeptide (Lys-Gly) (interchain with G-Cter in ubiquitin)" evidence="1">
    <location>
        <position position="564"/>
    </location>
</feature>
<feature type="splice variant" id="VSP_059621" description="In isoform Mpl-tr.">
    <original>VLEPSLGARGGTLELRPRARYSLQLRARLN</original>
    <variation>ETEACFVALASRPTPGPRPVPQRHCSPKSF</variation>
    <location>
        <begin position="428"/>
        <end position="457"/>
    </location>
</feature>
<feature type="splice variant" id="VSP_059622" description="In isoform Mpl-tr.">
    <location>
        <begin position="458"/>
        <end position="625"/>
    </location>
</feature>
<feature type="mutagenesis site" description="Completely abrogated binding to THPO." evidence="7">
    <original>F</original>
    <variation>S</variation>
    <location>
        <position position="104"/>
    </location>
</feature>
<feature type="sequence conflict" description="In Ref. 2; CAA52031." evidence="12" ref="2">
    <location>
        <begin position="1"/>
        <end position="7"/>
    </location>
</feature>
<feature type="sequence conflict" description="In Ref. 2; CAA52031." evidence="12" ref="2">
    <original>D</original>
    <variation>V</variation>
    <location>
        <position position="99"/>
    </location>
</feature>
<feature type="sequence conflict" description="In Ref. 2; CAA52031." evidence="12" ref="2">
    <original>P</original>
    <variation>PVRTSPAGE</variation>
    <location>
        <position position="222"/>
    </location>
</feature>
<feature type="sequence conflict" description="In Ref. 1; CAA80365, 2; CAA52031 and 5; AAI46614." evidence="12" ref="1 2 5">
    <original>G</original>
    <variation>S</variation>
    <location>
        <position position="241"/>
    </location>
</feature>
<feature type="strand" evidence="14">
    <location>
        <begin position="38"/>
        <end position="46"/>
    </location>
</feature>
<feature type="strand" evidence="14">
    <location>
        <begin position="49"/>
        <end position="52"/>
    </location>
</feature>
<feature type="strand" evidence="14">
    <location>
        <begin position="54"/>
        <end position="56"/>
    </location>
</feature>
<feature type="strand" evidence="14">
    <location>
        <begin position="60"/>
        <end position="62"/>
    </location>
</feature>
<feature type="strand" evidence="14">
    <location>
        <begin position="67"/>
        <end position="72"/>
    </location>
</feature>
<feature type="strand" evidence="14">
    <location>
        <begin position="79"/>
        <end position="81"/>
    </location>
</feature>
<feature type="strand" evidence="14">
    <location>
        <begin position="85"/>
        <end position="88"/>
    </location>
</feature>
<feature type="strand" evidence="14">
    <location>
        <begin position="91"/>
        <end position="94"/>
    </location>
</feature>
<feature type="strand" evidence="14">
    <location>
        <begin position="103"/>
        <end position="110"/>
    </location>
</feature>
<feature type="turn" evidence="14">
    <location>
        <begin position="114"/>
        <end position="116"/>
    </location>
</feature>
<feature type="strand" evidence="14">
    <location>
        <begin position="122"/>
        <end position="126"/>
    </location>
</feature>
<feature type="helix" evidence="14">
    <location>
        <begin position="127"/>
        <end position="129"/>
    </location>
</feature>
<feature type="strand" evidence="14">
    <location>
        <begin position="145"/>
        <end position="148"/>
    </location>
</feature>
<feature type="strand" evidence="14">
    <location>
        <begin position="159"/>
        <end position="161"/>
    </location>
</feature>
<feature type="turn" evidence="14">
    <location>
        <begin position="162"/>
        <end position="164"/>
    </location>
</feature>
<feature type="strand" evidence="14">
    <location>
        <begin position="165"/>
        <end position="175"/>
    </location>
</feature>
<feature type="strand" evidence="14">
    <location>
        <begin position="185"/>
        <end position="187"/>
    </location>
</feature>
<feature type="strand" evidence="14">
    <location>
        <begin position="240"/>
        <end position="242"/>
    </location>
</feature>
<feature type="strand" evidence="14">
    <location>
        <begin position="244"/>
        <end position="252"/>
    </location>
</feature>
<feature type="strand" evidence="14">
    <location>
        <begin position="254"/>
        <end position="256"/>
    </location>
</feature>
<feature type="strand" evidence="14">
    <location>
        <begin position="268"/>
        <end position="270"/>
    </location>
</feature>
<feature type="strand" evidence="14">
    <location>
        <begin position="357"/>
        <end position="359"/>
    </location>
</feature>
<feature type="strand" evidence="14">
    <location>
        <begin position="367"/>
        <end position="369"/>
    </location>
</feature>
<gene>
    <name type="primary">Mpl</name>
    <name type="synonym">Tpor</name>
</gene>
<evidence type="ECO:0000250" key="1">
    <source>
        <dbReference type="UniProtKB" id="P40238"/>
    </source>
</evidence>
<evidence type="ECO:0000255" key="2"/>
<evidence type="ECO:0000255" key="3">
    <source>
        <dbReference type="PROSITE-ProRule" id="PRU00316"/>
    </source>
</evidence>
<evidence type="ECO:0000269" key="4">
    <source>
    </source>
</evidence>
<evidence type="ECO:0000269" key="5">
    <source>
    </source>
</evidence>
<evidence type="ECO:0000269" key="6">
    <source>
    </source>
</evidence>
<evidence type="ECO:0000269" key="7">
    <source>
    </source>
</evidence>
<evidence type="ECO:0000269" key="8">
    <source>
    </source>
</evidence>
<evidence type="ECO:0000269" key="9">
    <source>
    </source>
</evidence>
<evidence type="ECO:0000269" key="10">
    <source>
    </source>
</evidence>
<evidence type="ECO:0000303" key="11">
    <source>
    </source>
</evidence>
<evidence type="ECO:0000305" key="12"/>
<evidence type="ECO:0007744" key="13">
    <source>
        <dbReference type="PDB" id="8U18"/>
    </source>
</evidence>
<evidence type="ECO:0007829" key="14">
    <source>
        <dbReference type="PDB" id="8VU5"/>
    </source>
</evidence>
<accession>Q08351</accession>
<accession>A6H8H6</accession>
<accession>Q8BRX0</accession>
<protein>
    <recommendedName>
        <fullName>Thrombopoietin receptor</fullName>
        <shortName>TPO-R</shortName>
    </recommendedName>
    <alternativeName>
        <fullName>Myeloproliferative leukemia protein</fullName>
    </alternativeName>
    <alternativeName>
        <fullName>Proto-oncogene c-Mpl</fullName>
    </alternativeName>
    <cdAntigenName>CD110</cdAntigenName>
</protein>